<keyword id="KW-1185">Reference proteome</keyword>
<evidence type="ECO:0000255" key="1">
    <source>
        <dbReference type="HAMAP-Rule" id="MF_01187"/>
    </source>
</evidence>
<organism>
    <name type="scientific">Francisella tularensis subsp. tularensis (strain SCHU S4 / Schu 4)</name>
    <dbReference type="NCBI Taxonomy" id="177416"/>
    <lineage>
        <taxon>Bacteria</taxon>
        <taxon>Pseudomonadati</taxon>
        <taxon>Pseudomonadota</taxon>
        <taxon>Gammaproteobacteria</taxon>
        <taxon>Thiotrichales</taxon>
        <taxon>Francisellaceae</taxon>
        <taxon>Francisella</taxon>
    </lineage>
</organism>
<feature type="chain" id="PRO_0000291095" description="UPF0434 protein FTT_1479c">
    <location>
        <begin position="1"/>
        <end position="62"/>
    </location>
</feature>
<dbReference type="EMBL" id="AJ749949">
    <property type="protein sequence ID" value="CAG46112.1"/>
    <property type="molecule type" value="Genomic_DNA"/>
</dbReference>
<dbReference type="RefSeq" id="WP_003016659.1">
    <property type="nucleotide sequence ID" value="NZ_CP010290.1"/>
</dbReference>
<dbReference type="RefSeq" id="YP_170415.1">
    <property type="nucleotide sequence ID" value="NC_006570.2"/>
</dbReference>
<dbReference type="SMR" id="Q5NEX7"/>
<dbReference type="STRING" id="177416.FTT_1479c"/>
<dbReference type="DNASU" id="3192303"/>
<dbReference type="EnsemblBacteria" id="CAG46112">
    <property type="protein sequence ID" value="CAG46112"/>
    <property type="gene ID" value="FTT_1479c"/>
</dbReference>
<dbReference type="KEGG" id="ftu:FTT_1479c"/>
<dbReference type="eggNOG" id="COG2835">
    <property type="taxonomic scope" value="Bacteria"/>
</dbReference>
<dbReference type="OrthoDB" id="9812205at2"/>
<dbReference type="Proteomes" id="UP000001174">
    <property type="component" value="Chromosome"/>
</dbReference>
<dbReference type="GO" id="GO:0005829">
    <property type="term" value="C:cytosol"/>
    <property type="evidence" value="ECO:0007669"/>
    <property type="project" value="TreeGrafter"/>
</dbReference>
<dbReference type="FunFam" id="2.20.25.10:FF:000002">
    <property type="entry name" value="UPF0434 protein YcaR"/>
    <property type="match status" value="1"/>
</dbReference>
<dbReference type="Gene3D" id="2.20.25.10">
    <property type="match status" value="1"/>
</dbReference>
<dbReference type="HAMAP" id="MF_01187">
    <property type="entry name" value="UPF0434"/>
    <property type="match status" value="1"/>
</dbReference>
<dbReference type="InterPro" id="IPR005651">
    <property type="entry name" value="Trm112-like"/>
</dbReference>
<dbReference type="PANTHER" id="PTHR33505:SF4">
    <property type="entry name" value="PROTEIN PREY, MITOCHONDRIAL"/>
    <property type="match status" value="1"/>
</dbReference>
<dbReference type="PANTHER" id="PTHR33505">
    <property type="entry name" value="ZGC:162634"/>
    <property type="match status" value="1"/>
</dbReference>
<dbReference type="Pfam" id="PF03966">
    <property type="entry name" value="Trm112p"/>
    <property type="match status" value="1"/>
</dbReference>
<dbReference type="SUPFAM" id="SSF158997">
    <property type="entry name" value="Trm112p-like"/>
    <property type="match status" value="1"/>
</dbReference>
<gene>
    <name type="ordered locus">FTT_1479c</name>
</gene>
<protein>
    <recommendedName>
        <fullName evidence="1">UPF0434 protein FTT_1479c</fullName>
    </recommendedName>
</protein>
<name>Y1479_FRATT</name>
<proteinExistence type="inferred from homology"/>
<comment type="similarity">
    <text evidence="1">Belongs to the UPF0434 family.</text>
</comment>
<accession>Q5NEX7</accession>
<reference key="1">
    <citation type="journal article" date="2005" name="Nat. Genet.">
        <title>The complete genome sequence of Francisella tularensis, the causative agent of tularemia.</title>
        <authorList>
            <person name="Larsson P."/>
            <person name="Oyston P.C.F."/>
            <person name="Chain P."/>
            <person name="Chu M.C."/>
            <person name="Duffield M."/>
            <person name="Fuxelius H.-H."/>
            <person name="Garcia E."/>
            <person name="Haelltorp G."/>
            <person name="Johansson D."/>
            <person name="Isherwood K.E."/>
            <person name="Karp P.D."/>
            <person name="Larsson E."/>
            <person name="Liu Y."/>
            <person name="Michell S."/>
            <person name="Prior J."/>
            <person name="Prior R."/>
            <person name="Malfatti S."/>
            <person name="Sjoestedt A."/>
            <person name="Svensson K."/>
            <person name="Thompson N."/>
            <person name="Vergez L."/>
            <person name="Wagg J.K."/>
            <person name="Wren B.W."/>
            <person name="Lindler L.E."/>
            <person name="Andersson S.G.E."/>
            <person name="Forsman M."/>
            <person name="Titball R.W."/>
        </authorList>
    </citation>
    <scope>NUCLEOTIDE SEQUENCE [LARGE SCALE GENOMIC DNA]</scope>
    <source>
        <strain>SCHU S4 / Schu 4</strain>
    </source>
</reference>
<sequence>MDHSVLNVLVCPICKANLYYDKENQVLVCKADKLAYPIRENIPVMLVEEAKKMTLEEVKKYG</sequence>